<accession>Q68XV5</accession>
<evidence type="ECO:0000255" key="1">
    <source>
        <dbReference type="HAMAP-Rule" id="MF_00291"/>
    </source>
</evidence>
<evidence type="ECO:0000305" key="2"/>
<protein>
    <recommendedName>
        <fullName evidence="1">Small ribosomal subunit protein uS2</fullName>
    </recommendedName>
    <alternativeName>
        <fullName evidence="2">30S ribosomal protein S2</fullName>
    </alternativeName>
</protein>
<feature type="chain" id="PRO_0000134229" description="Small ribosomal subunit protein uS2">
    <location>
        <begin position="1"/>
        <end position="295"/>
    </location>
</feature>
<proteinExistence type="inferred from homology"/>
<organism>
    <name type="scientific">Rickettsia typhi (strain ATCC VR-144 / Wilmington)</name>
    <dbReference type="NCBI Taxonomy" id="257363"/>
    <lineage>
        <taxon>Bacteria</taxon>
        <taxon>Pseudomonadati</taxon>
        <taxon>Pseudomonadota</taxon>
        <taxon>Alphaproteobacteria</taxon>
        <taxon>Rickettsiales</taxon>
        <taxon>Rickettsiaceae</taxon>
        <taxon>Rickettsieae</taxon>
        <taxon>Rickettsia</taxon>
        <taxon>typhus group</taxon>
    </lineage>
</organism>
<comment type="similarity">
    <text evidence="1">Belongs to the universal ribosomal protein uS2 family.</text>
</comment>
<sequence length="295" mass="33096">MSKISPINIKELLDAGVHFGHKTSRWNPKMASYIYGERDDVHIIDLRQSAALMSVALNAIYETVKKDGKILFVSTKIQASDIIAEYAEKCGQYYVNNRWLGGMLTNWKTIACSIEKLEKLEKTLESEETRVCYTKKEILDMSRKKDKLLLSLAGIRNLNSKPDLLVVIDTNKEHIAINEAVKLNIPIVAVVDTNSNPDNINYPIPGNDDSIRSIRLYCSLFADAALQGLEESMKVSGVDIGTMQEHTDKALTSKTISKLKQTKKFSKTQNIDEETNTEFDQALSDACENKNSDNT</sequence>
<dbReference type="EMBL" id="AE017197">
    <property type="protein sequence ID" value="AAU03537.1"/>
    <property type="molecule type" value="Genomic_DNA"/>
</dbReference>
<dbReference type="RefSeq" id="WP_011190524.1">
    <property type="nucleotide sequence ID" value="NC_006142.1"/>
</dbReference>
<dbReference type="SMR" id="Q68XV5"/>
<dbReference type="KEGG" id="rty:RT0050"/>
<dbReference type="eggNOG" id="COG0052">
    <property type="taxonomic scope" value="Bacteria"/>
</dbReference>
<dbReference type="HOGENOM" id="CLU_040318_2_1_5"/>
<dbReference type="OrthoDB" id="9808036at2"/>
<dbReference type="Proteomes" id="UP000000604">
    <property type="component" value="Chromosome"/>
</dbReference>
<dbReference type="GO" id="GO:0022627">
    <property type="term" value="C:cytosolic small ribosomal subunit"/>
    <property type="evidence" value="ECO:0007669"/>
    <property type="project" value="TreeGrafter"/>
</dbReference>
<dbReference type="GO" id="GO:0003735">
    <property type="term" value="F:structural constituent of ribosome"/>
    <property type="evidence" value="ECO:0007669"/>
    <property type="project" value="InterPro"/>
</dbReference>
<dbReference type="GO" id="GO:0006412">
    <property type="term" value="P:translation"/>
    <property type="evidence" value="ECO:0007669"/>
    <property type="project" value="UniProtKB-UniRule"/>
</dbReference>
<dbReference type="CDD" id="cd01425">
    <property type="entry name" value="RPS2"/>
    <property type="match status" value="1"/>
</dbReference>
<dbReference type="Gene3D" id="3.40.50.10490">
    <property type="entry name" value="Glucose-6-phosphate isomerase like protein, domain 1"/>
    <property type="match status" value="1"/>
</dbReference>
<dbReference type="Gene3D" id="1.10.287.610">
    <property type="entry name" value="Helix hairpin bin"/>
    <property type="match status" value="1"/>
</dbReference>
<dbReference type="HAMAP" id="MF_00291_B">
    <property type="entry name" value="Ribosomal_uS2_B"/>
    <property type="match status" value="1"/>
</dbReference>
<dbReference type="InterPro" id="IPR001865">
    <property type="entry name" value="Ribosomal_uS2"/>
</dbReference>
<dbReference type="InterPro" id="IPR005706">
    <property type="entry name" value="Ribosomal_uS2_bac/mit/plastid"/>
</dbReference>
<dbReference type="InterPro" id="IPR018130">
    <property type="entry name" value="Ribosomal_uS2_CS"/>
</dbReference>
<dbReference type="InterPro" id="IPR023591">
    <property type="entry name" value="Ribosomal_uS2_flav_dom_sf"/>
</dbReference>
<dbReference type="NCBIfam" id="TIGR01011">
    <property type="entry name" value="rpsB_bact"/>
    <property type="match status" value="1"/>
</dbReference>
<dbReference type="PANTHER" id="PTHR12534">
    <property type="entry name" value="30S RIBOSOMAL PROTEIN S2 PROKARYOTIC AND ORGANELLAR"/>
    <property type="match status" value="1"/>
</dbReference>
<dbReference type="PANTHER" id="PTHR12534:SF0">
    <property type="entry name" value="SMALL RIBOSOMAL SUBUNIT PROTEIN US2M"/>
    <property type="match status" value="1"/>
</dbReference>
<dbReference type="Pfam" id="PF00318">
    <property type="entry name" value="Ribosomal_S2"/>
    <property type="match status" value="1"/>
</dbReference>
<dbReference type="PRINTS" id="PR00395">
    <property type="entry name" value="RIBOSOMALS2"/>
</dbReference>
<dbReference type="SUPFAM" id="SSF52313">
    <property type="entry name" value="Ribosomal protein S2"/>
    <property type="match status" value="1"/>
</dbReference>
<dbReference type="PROSITE" id="PS00962">
    <property type="entry name" value="RIBOSOMAL_S2_1"/>
    <property type="match status" value="1"/>
</dbReference>
<dbReference type="PROSITE" id="PS00963">
    <property type="entry name" value="RIBOSOMAL_S2_2"/>
    <property type="match status" value="1"/>
</dbReference>
<gene>
    <name evidence="1" type="primary">rpsB</name>
    <name type="ordered locus">RT0050</name>
</gene>
<name>RS2_RICTY</name>
<reference key="1">
    <citation type="journal article" date="2004" name="J. Bacteriol.">
        <title>Complete genome sequence of Rickettsia typhi and comparison with sequences of other Rickettsiae.</title>
        <authorList>
            <person name="McLeod M.P."/>
            <person name="Qin X."/>
            <person name="Karpathy S.E."/>
            <person name="Gioia J."/>
            <person name="Highlander S.K."/>
            <person name="Fox G.E."/>
            <person name="McNeill T.Z."/>
            <person name="Jiang H."/>
            <person name="Muzny D."/>
            <person name="Jacob L.S."/>
            <person name="Hawes A.C."/>
            <person name="Sodergren E."/>
            <person name="Gill R."/>
            <person name="Hume J."/>
            <person name="Morgan M."/>
            <person name="Fan G."/>
            <person name="Amin A.G."/>
            <person name="Gibbs R.A."/>
            <person name="Hong C."/>
            <person name="Yu X.-J."/>
            <person name="Walker D.H."/>
            <person name="Weinstock G.M."/>
        </authorList>
    </citation>
    <scope>NUCLEOTIDE SEQUENCE [LARGE SCALE GENOMIC DNA]</scope>
    <source>
        <strain>ATCC VR-144 / Wilmington</strain>
    </source>
</reference>
<keyword id="KW-0687">Ribonucleoprotein</keyword>
<keyword id="KW-0689">Ribosomal protein</keyword>